<feature type="chain" id="PRO_0000255360" description="Glycerol-3-phosphate dehydrogenase [NAD(P)+]">
    <location>
        <begin position="1"/>
        <end position="349"/>
    </location>
</feature>
<feature type="active site" description="Proton acceptor" evidence="1">
    <location>
        <position position="193"/>
    </location>
</feature>
<feature type="binding site" evidence="1">
    <location>
        <position position="16"/>
    </location>
    <ligand>
        <name>NADPH</name>
        <dbReference type="ChEBI" id="CHEBI:57783"/>
    </ligand>
</feature>
<feature type="binding site" evidence="1">
    <location>
        <position position="36"/>
    </location>
    <ligand>
        <name>NADPH</name>
        <dbReference type="ChEBI" id="CHEBI:57783"/>
    </ligand>
</feature>
<feature type="binding site" evidence="1">
    <location>
        <position position="110"/>
    </location>
    <ligand>
        <name>NADPH</name>
        <dbReference type="ChEBI" id="CHEBI:57783"/>
    </ligand>
</feature>
<feature type="binding site" evidence="1">
    <location>
        <position position="110"/>
    </location>
    <ligand>
        <name>sn-glycerol 3-phosphate</name>
        <dbReference type="ChEBI" id="CHEBI:57597"/>
    </ligand>
</feature>
<feature type="binding site" evidence="1">
    <location>
        <position position="138"/>
    </location>
    <ligand>
        <name>sn-glycerol 3-phosphate</name>
        <dbReference type="ChEBI" id="CHEBI:57597"/>
    </ligand>
</feature>
<feature type="binding site" evidence="1">
    <location>
        <position position="140"/>
    </location>
    <ligand>
        <name>sn-glycerol 3-phosphate</name>
        <dbReference type="ChEBI" id="CHEBI:57597"/>
    </ligand>
</feature>
<feature type="binding site" evidence="1">
    <location>
        <position position="142"/>
    </location>
    <ligand>
        <name>NADPH</name>
        <dbReference type="ChEBI" id="CHEBI:57783"/>
    </ligand>
</feature>
<feature type="binding site" evidence="1">
    <location>
        <position position="193"/>
    </location>
    <ligand>
        <name>sn-glycerol 3-phosphate</name>
        <dbReference type="ChEBI" id="CHEBI:57597"/>
    </ligand>
</feature>
<feature type="binding site" evidence="1">
    <location>
        <position position="246"/>
    </location>
    <ligand>
        <name>sn-glycerol 3-phosphate</name>
        <dbReference type="ChEBI" id="CHEBI:57597"/>
    </ligand>
</feature>
<feature type="binding site" evidence="1">
    <location>
        <position position="256"/>
    </location>
    <ligand>
        <name>sn-glycerol 3-phosphate</name>
        <dbReference type="ChEBI" id="CHEBI:57597"/>
    </ligand>
</feature>
<feature type="binding site" evidence="1">
    <location>
        <position position="257"/>
    </location>
    <ligand>
        <name>NADPH</name>
        <dbReference type="ChEBI" id="CHEBI:57783"/>
    </ligand>
</feature>
<feature type="binding site" evidence="1">
    <location>
        <position position="257"/>
    </location>
    <ligand>
        <name>sn-glycerol 3-phosphate</name>
        <dbReference type="ChEBI" id="CHEBI:57597"/>
    </ligand>
</feature>
<feature type="binding site" evidence="1">
    <location>
        <position position="258"/>
    </location>
    <ligand>
        <name>sn-glycerol 3-phosphate</name>
        <dbReference type="ChEBI" id="CHEBI:57597"/>
    </ligand>
</feature>
<feature type="binding site" evidence="1">
    <location>
        <position position="281"/>
    </location>
    <ligand>
        <name>NADPH</name>
        <dbReference type="ChEBI" id="CHEBI:57783"/>
    </ligand>
</feature>
<feature type="binding site" evidence="1">
    <location>
        <position position="283"/>
    </location>
    <ligand>
        <name>NADPH</name>
        <dbReference type="ChEBI" id="CHEBI:57783"/>
    </ligand>
</feature>
<dbReference type="EC" id="1.1.1.94" evidence="1"/>
<dbReference type="EMBL" id="CP000230">
    <property type="protein sequence ID" value="ABC24365.1"/>
    <property type="molecule type" value="Genomic_DNA"/>
</dbReference>
<dbReference type="RefSeq" id="WP_011391318.1">
    <property type="nucleotide sequence ID" value="NC_007643.1"/>
</dbReference>
<dbReference type="RefSeq" id="YP_428652.1">
    <property type="nucleotide sequence ID" value="NC_007643.1"/>
</dbReference>
<dbReference type="SMR" id="Q2RND0"/>
<dbReference type="STRING" id="269796.Rru_A3571"/>
<dbReference type="EnsemblBacteria" id="ABC24365">
    <property type="protein sequence ID" value="ABC24365"/>
    <property type="gene ID" value="Rru_A3571"/>
</dbReference>
<dbReference type="KEGG" id="rru:Rru_A3571"/>
<dbReference type="PATRIC" id="fig|269796.9.peg.3692"/>
<dbReference type="eggNOG" id="COG0240">
    <property type="taxonomic scope" value="Bacteria"/>
</dbReference>
<dbReference type="HOGENOM" id="CLU_033449_0_2_5"/>
<dbReference type="PhylomeDB" id="Q2RND0"/>
<dbReference type="UniPathway" id="UPA00940"/>
<dbReference type="Proteomes" id="UP000001929">
    <property type="component" value="Chromosome"/>
</dbReference>
<dbReference type="GO" id="GO:0005829">
    <property type="term" value="C:cytosol"/>
    <property type="evidence" value="ECO:0007669"/>
    <property type="project" value="TreeGrafter"/>
</dbReference>
<dbReference type="GO" id="GO:0047952">
    <property type="term" value="F:glycerol-3-phosphate dehydrogenase [NAD(P)+] activity"/>
    <property type="evidence" value="ECO:0007669"/>
    <property type="project" value="UniProtKB-UniRule"/>
</dbReference>
<dbReference type="GO" id="GO:0051287">
    <property type="term" value="F:NAD binding"/>
    <property type="evidence" value="ECO:0007669"/>
    <property type="project" value="InterPro"/>
</dbReference>
<dbReference type="GO" id="GO:0005975">
    <property type="term" value="P:carbohydrate metabolic process"/>
    <property type="evidence" value="ECO:0007669"/>
    <property type="project" value="InterPro"/>
</dbReference>
<dbReference type="GO" id="GO:0046167">
    <property type="term" value="P:glycerol-3-phosphate biosynthetic process"/>
    <property type="evidence" value="ECO:0007669"/>
    <property type="project" value="UniProtKB-UniRule"/>
</dbReference>
<dbReference type="GO" id="GO:0046168">
    <property type="term" value="P:glycerol-3-phosphate catabolic process"/>
    <property type="evidence" value="ECO:0007669"/>
    <property type="project" value="InterPro"/>
</dbReference>
<dbReference type="GO" id="GO:0006650">
    <property type="term" value="P:glycerophospholipid metabolic process"/>
    <property type="evidence" value="ECO:0007669"/>
    <property type="project" value="UniProtKB-UniRule"/>
</dbReference>
<dbReference type="GO" id="GO:0008654">
    <property type="term" value="P:phospholipid biosynthetic process"/>
    <property type="evidence" value="ECO:0007669"/>
    <property type="project" value="UniProtKB-KW"/>
</dbReference>
<dbReference type="FunFam" id="1.10.1040.10:FF:000001">
    <property type="entry name" value="Glycerol-3-phosphate dehydrogenase [NAD(P)+]"/>
    <property type="match status" value="1"/>
</dbReference>
<dbReference type="FunFam" id="3.40.50.720:FF:000019">
    <property type="entry name" value="Glycerol-3-phosphate dehydrogenase [NAD(P)+]"/>
    <property type="match status" value="1"/>
</dbReference>
<dbReference type="Gene3D" id="1.10.1040.10">
    <property type="entry name" value="N-(1-d-carboxylethyl)-l-norvaline Dehydrogenase, domain 2"/>
    <property type="match status" value="1"/>
</dbReference>
<dbReference type="Gene3D" id="3.40.50.720">
    <property type="entry name" value="NAD(P)-binding Rossmann-like Domain"/>
    <property type="match status" value="1"/>
</dbReference>
<dbReference type="HAMAP" id="MF_00394">
    <property type="entry name" value="NAD_Glyc3P_dehydrog"/>
    <property type="match status" value="1"/>
</dbReference>
<dbReference type="InterPro" id="IPR008927">
    <property type="entry name" value="6-PGluconate_DH-like_C_sf"/>
</dbReference>
<dbReference type="InterPro" id="IPR013328">
    <property type="entry name" value="6PGD_dom2"/>
</dbReference>
<dbReference type="InterPro" id="IPR006168">
    <property type="entry name" value="G3P_DH_NAD-dep"/>
</dbReference>
<dbReference type="InterPro" id="IPR006109">
    <property type="entry name" value="G3P_DH_NAD-dep_C"/>
</dbReference>
<dbReference type="InterPro" id="IPR011128">
    <property type="entry name" value="G3P_DH_NAD-dep_N"/>
</dbReference>
<dbReference type="InterPro" id="IPR036291">
    <property type="entry name" value="NAD(P)-bd_dom_sf"/>
</dbReference>
<dbReference type="NCBIfam" id="NF000940">
    <property type="entry name" value="PRK00094.1-2"/>
    <property type="match status" value="1"/>
</dbReference>
<dbReference type="NCBIfam" id="NF000942">
    <property type="entry name" value="PRK00094.1-4"/>
    <property type="match status" value="1"/>
</dbReference>
<dbReference type="PANTHER" id="PTHR11728">
    <property type="entry name" value="GLYCEROL-3-PHOSPHATE DEHYDROGENASE"/>
    <property type="match status" value="1"/>
</dbReference>
<dbReference type="PANTHER" id="PTHR11728:SF1">
    <property type="entry name" value="GLYCEROL-3-PHOSPHATE DEHYDROGENASE [NAD(+)] 2, CHLOROPLASTIC"/>
    <property type="match status" value="1"/>
</dbReference>
<dbReference type="Pfam" id="PF07479">
    <property type="entry name" value="NAD_Gly3P_dh_C"/>
    <property type="match status" value="1"/>
</dbReference>
<dbReference type="Pfam" id="PF01210">
    <property type="entry name" value="NAD_Gly3P_dh_N"/>
    <property type="match status" value="1"/>
</dbReference>
<dbReference type="PIRSF" id="PIRSF000114">
    <property type="entry name" value="Glycerol-3-P_dh"/>
    <property type="match status" value="1"/>
</dbReference>
<dbReference type="PRINTS" id="PR00077">
    <property type="entry name" value="GPDHDRGNASE"/>
</dbReference>
<dbReference type="SUPFAM" id="SSF48179">
    <property type="entry name" value="6-phosphogluconate dehydrogenase C-terminal domain-like"/>
    <property type="match status" value="1"/>
</dbReference>
<dbReference type="SUPFAM" id="SSF51735">
    <property type="entry name" value="NAD(P)-binding Rossmann-fold domains"/>
    <property type="match status" value="1"/>
</dbReference>
<dbReference type="PROSITE" id="PS00957">
    <property type="entry name" value="NAD_G3PDH"/>
    <property type="match status" value="1"/>
</dbReference>
<sequence length="349" mass="35798">MNQIIDHIAVIGGGAWGTALAQTSRRAGRRVTLWAREPEVARAINATHENPDFLPGVSLDPGLHATADLAEALRGAEAVLVVCPAQALRPVLTTARPLWPGRAPMVICAKGVEQGSGARMSEVATAVLPEAPLAVLSGPTFAREVAEGRPTAVTLACADGALAEALVLALGTRTFRPYASTDVVGAEIGGAVKNVLAIACGVVEGLGLGDNARAALLTRGLAEITRLGRALGARSETLSGLSGLGDLILTATSMQSRNFSLGFALGQGRTLDQVLGERRSVAEGVHTASAVVALAARWAIEMPICAAIHGVLSGDYDVTSAIESLLSRPLRVEGGSESQIHPTAKTATP</sequence>
<protein>
    <recommendedName>
        <fullName evidence="1">Glycerol-3-phosphate dehydrogenase [NAD(P)+]</fullName>
        <ecNumber evidence="1">1.1.1.94</ecNumber>
    </recommendedName>
    <alternativeName>
        <fullName evidence="1">NAD(P)(+)-dependent glycerol-3-phosphate dehydrogenase</fullName>
    </alternativeName>
    <alternativeName>
        <fullName evidence="1">NAD(P)H-dependent dihydroxyacetone-phosphate reductase</fullName>
    </alternativeName>
</protein>
<name>GPDA_RHORT</name>
<organism>
    <name type="scientific">Rhodospirillum rubrum (strain ATCC 11170 / ATH 1.1.1 / DSM 467 / LMG 4362 / NCIMB 8255 / S1)</name>
    <dbReference type="NCBI Taxonomy" id="269796"/>
    <lineage>
        <taxon>Bacteria</taxon>
        <taxon>Pseudomonadati</taxon>
        <taxon>Pseudomonadota</taxon>
        <taxon>Alphaproteobacteria</taxon>
        <taxon>Rhodospirillales</taxon>
        <taxon>Rhodospirillaceae</taxon>
        <taxon>Rhodospirillum</taxon>
    </lineage>
</organism>
<proteinExistence type="inferred from homology"/>
<evidence type="ECO:0000255" key="1">
    <source>
        <dbReference type="HAMAP-Rule" id="MF_00394"/>
    </source>
</evidence>
<comment type="function">
    <text evidence="1">Catalyzes the reduction of the glycolytic intermediate dihydroxyacetone phosphate (DHAP) to sn-glycerol 3-phosphate (G3P), the key precursor for phospholipid synthesis.</text>
</comment>
<comment type="catalytic activity">
    <reaction evidence="1">
        <text>sn-glycerol 3-phosphate + NAD(+) = dihydroxyacetone phosphate + NADH + H(+)</text>
        <dbReference type="Rhea" id="RHEA:11092"/>
        <dbReference type="ChEBI" id="CHEBI:15378"/>
        <dbReference type="ChEBI" id="CHEBI:57540"/>
        <dbReference type="ChEBI" id="CHEBI:57597"/>
        <dbReference type="ChEBI" id="CHEBI:57642"/>
        <dbReference type="ChEBI" id="CHEBI:57945"/>
        <dbReference type="EC" id="1.1.1.94"/>
    </reaction>
    <physiologicalReaction direction="right-to-left" evidence="1">
        <dbReference type="Rhea" id="RHEA:11094"/>
    </physiologicalReaction>
</comment>
<comment type="catalytic activity">
    <reaction evidence="1">
        <text>sn-glycerol 3-phosphate + NADP(+) = dihydroxyacetone phosphate + NADPH + H(+)</text>
        <dbReference type="Rhea" id="RHEA:11096"/>
        <dbReference type="ChEBI" id="CHEBI:15378"/>
        <dbReference type="ChEBI" id="CHEBI:57597"/>
        <dbReference type="ChEBI" id="CHEBI:57642"/>
        <dbReference type="ChEBI" id="CHEBI:57783"/>
        <dbReference type="ChEBI" id="CHEBI:58349"/>
        <dbReference type="EC" id="1.1.1.94"/>
    </reaction>
    <physiologicalReaction direction="right-to-left" evidence="1">
        <dbReference type="Rhea" id="RHEA:11098"/>
    </physiologicalReaction>
</comment>
<comment type="pathway">
    <text evidence="1">Membrane lipid metabolism; glycerophospholipid metabolism.</text>
</comment>
<comment type="subcellular location">
    <subcellularLocation>
        <location evidence="1">Cytoplasm</location>
    </subcellularLocation>
</comment>
<comment type="similarity">
    <text evidence="1">Belongs to the NAD-dependent glycerol-3-phosphate dehydrogenase family.</text>
</comment>
<keyword id="KW-0963">Cytoplasm</keyword>
<keyword id="KW-0444">Lipid biosynthesis</keyword>
<keyword id="KW-0443">Lipid metabolism</keyword>
<keyword id="KW-0520">NAD</keyword>
<keyword id="KW-0521">NADP</keyword>
<keyword id="KW-0547">Nucleotide-binding</keyword>
<keyword id="KW-0560">Oxidoreductase</keyword>
<keyword id="KW-0594">Phospholipid biosynthesis</keyword>
<keyword id="KW-1208">Phospholipid metabolism</keyword>
<keyword id="KW-1185">Reference proteome</keyword>
<gene>
    <name evidence="1" type="primary">gpsA</name>
    <name type="ordered locus">Rru_A3571</name>
</gene>
<reference key="1">
    <citation type="journal article" date="2011" name="Stand. Genomic Sci.">
        <title>Complete genome sequence of Rhodospirillum rubrum type strain (S1).</title>
        <authorList>
            <person name="Munk A.C."/>
            <person name="Copeland A."/>
            <person name="Lucas S."/>
            <person name="Lapidus A."/>
            <person name="Del Rio T.G."/>
            <person name="Barry K."/>
            <person name="Detter J.C."/>
            <person name="Hammon N."/>
            <person name="Israni S."/>
            <person name="Pitluck S."/>
            <person name="Brettin T."/>
            <person name="Bruce D."/>
            <person name="Han C."/>
            <person name="Tapia R."/>
            <person name="Gilna P."/>
            <person name="Schmutz J."/>
            <person name="Larimer F."/>
            <person name="Land M."/>
            <person name="Kyrpides N.C."/>
            <person name="Mavromatis K."/>
            <person name="Richardson P."/>
            <person name="Rohde M."/>
            <person name="Goeker M."/>
            <person name="Klenk H.P."/>
            <person name="Zhang Y."/>
            <person name="Roberts G.P."/>
            <person name="Reslewic S."/>
            <person name="Schwartz D.C."/>
        </authorList>
    </citation>
    <scope>NUCLEOTIDE SEQUENCE [LARGE SCALE GENOMIC DNA]</scope>
    <source>
        <strain>ATCC 11170 / ATH 1.1.1 / DSM 467 / LMG 4362 / NCIMB 8255 / S1</strain>
    </source>
</reference>
<accession>Q2RND0</accession>